<sequence length="9" mass="975">GPDSAFLRL</sequence>
<comment type="function">
    <text evidence="1">FMRFamides and FMRFamide-like peptides are neuropeptides.</text>
</comment>
<comment type="subcellular location">
    <subcellularLocation>
        <location evidence="6">Secreted</location>
    </subcellularLocation>
</comment>
<comment type="similarity">
    <text evidence="2">Belongs to the FARP (FMRF amide related peptide) family.</text>
</comment>
<organism>
    <name type="scientific">Namaquaphasma ookiepense</name>
    <name type="common">Gladiator bug</name>
    <dbReference type="NCBI Taxonomy" id="409167"/>
    <lineage>
        <taxon>Eukaryota</taxon>
        <taxon>Metazoa</taxon>
        <taxon>Ecdysozoa</taxon>
        <taxon>Arthropoda</taxon>
        <taxon>Hexapoda</taxon>
        <taxon>Insecta</taxon>
        <taxon>Pterygota</taxon>
        <taxon>Neoptera</taxon>
        <taxon>Polyneoptera</taxon>
        <taxon>Mantophasmatodea</taxon>
        <taxon>Austrophasmatidae</taxon>
        <taxon>Namaquaphasma</taxon>
    </lineage>
</organism>
<reference evidence="5" key="1">
    <citation type="journal article" date="2012" name="Syst. Biol.">
        <title>Peptidomics-based phylogeny and biogeography of Mantophasmatodea (Hexapoda).</title>
        <authorList>
            <person name="Predel R."/>
            <person name="Neupert S."/>
            <person name="Huetteroth W."/>
            <person name="Kahnt J."/>
            <person name="Waidelich D."/>
            <person name="Roth S."/>
        </authorList>
    </citation>
    <scope>PROTEIN SEQUENCE</scope>
    <scope>AMIDATION AT LEU-9</scope>
    <source>
        <tissue evidence="3">Thoracic perisympathetic organs</tissue>
    </source>
</reference>
<feature type="peptide" id="PRO_0000420498" description="Extended FMRFamide-3">
    <location>
        <begin position="1"/>
        <end position="9"/>
    </location>
</feature>
<feature type="modified residue" description="Leucine amide" evidence="3">
    <location>
        <position position="9"/>
    </location>
</feature>
<feature type="unsure residue" description="L or I" evidence="3">
    <location>
        <position position="7"/>
    </location>
</feature>
<feature type="unsure residue" description="L or I" evidence="3">
    <location>
        <position position="9"/>
    </location>
</feature>
<proteinExistence type="evidence at protein level"/>
<keyword id="KW-0027">Amidation</keyword>
<keyword id="KW-0903">Direct protein sequencing</keyword>
<keyword id="KW-0527">Neuropeptide</keyword>
<keyword id="KW-0964">Secreted</keyword>
<name>FAR3_NAMOO</name>
<dbReference type="GO" id="GO:0005576">
    <property type="term" value="C:extracellular region"/>
    <property type="evidence" value="ECO:0007669"/>
    <property type="project" value="UniProtKB-SubCell"/>
</dbReference>
<dbReference type="GO" id="GO:0007218">
    <property type="term" value="P:neuropeptide signaling pathway"/>
    <property type="evidence" value="ECO:0007669"/>
    <property type="project" value="UniProtKB-KW"/>
</dbReference>
<protein>
    <recommendedName>
        <fullName>Extended FMRFamide-3</fullName>
        <shortName evidence="4">FMRFa-3</shortName>
    </recommendedName>
</protein>
<accession>B0M2T3</accession>
<evidence type="ECO:0000250" key="1">
    <source>
        <dbReference type="UniProtKB" id="P34405"/>
    </source>
</evidence>
<evidence type="ECO:0000255" key="2"/>
<evidence type="ECO:0000269" key="3">
    <source>
    </source>
</evidence>
<evidence type="ECO:0000303" key="4">
    <source>
    </source>
</evidence>
<evidence type="ECO:0000305" key="5"/>
<evidence type="ECO:0000305" key="6">
    <source>
    </source>
</evidence>